<gene>
    <name evidence="4" type="primary">ORF3a</name>
</gene>
<keyword id="KW-1031">Host cell junction</keyword>
<keyword id="KW-1040">Host Golgi apparatus</keyword>
<keyword id="KW-1043">Host membrane</keyword>
<keyword id="KW-1045">Host mitochondrion</keyword>
<keyword id="KW-1047">Host mitochondrion outer membrane</keyword>
<keyword id="KW-0472">Membrane</keyword>
<keyword id="KW-1185">Reference proteome</keyword>
<keyword id="KW-0812">Transmembrane</keyword>
<keyword id="KW-1133">Transmembrane helix</keyword>
<feature type="chain" id="PRO_0000434885" description="P3a">
    <location>
        <begin position="1"/>
        <end position="45"/>
    </location>
</feature>
<feature type="transmembrane region" description="Helical" evidence="2">
    <location>
        <begin position="9"/>
        <end position="29"/>
    </location>
</feature>
<dbReference type="EMBL" id="X13063">
    <property type="status" value="NOT_ANNOTATED_CDS"/>
    <property type="molecule type" value="Genomic_RNA"/>
</dbReference>
<dbReference type="SMR" id="P0DJZ8"/>
<dbReference type="Proteomes" id="UP000007545">
    <property type="component" value="Segment"/>
</dbReference>
<dbReference type="GO" id="GO:0044177">
    <property type="term" value="C:host cell Golgi apparatus"/>
    <property type="evidence" value="ECO:0007669"/>
    <property type="project" value="UniProtKB-SubCell"/>
</dbReference>
<dbReference type="GO" id="GO:0044193">
    <property type="term" value="C:host cell mitochondrial outer membrane"/>
    <property type="evidence" value="ECO:0007669"/>
    <property type="project" value="UniProtKB-SubCell"/>
</dbReference>
<dbReference type="GO" id="GO:0044219">
    <property type="term" value="C:host cell plasmodesma"/>
    <property type="evidence" value="ECO:0007669"/>
    <property type="project" value="UniProtKB-SubCell"/>
</dbReference>
<dbReference type="GO" id="GO:0016020">
    <property type="term" value="C:membrane"/>
    <property type="evidence" value="ECO:0007669"/>
    <property type="project" value="UniProtKB-KW"/>
</dbReference>
<comment type="function">
    <text evidence="3">Together with movement protein P17, plays an essential role in virus long distance movement.</text>
</comment>
<comment type="subcellular location">
    <subcellularLocation>
        <location evidence="3">Host cell junction</location>
        <location evidence="3">Host plasmodesma</location>
    </subcellularLocation>
    <subcellularLocation>
        <location evidence="3">Host Golgi apparatus</location>
    </subcellularLocation>
    <subcellularLocation>
        <location evidence="1">Host chloroplast envelope</location>
    </subcellularLocation>
    <subcellularLocation>
        <location evidence="1">Host mitochondrion outer membrane</location>
    </subcellularLocation>
    <text evidence="1">P3a directs P17 to the mitochondrial outer membrane while P17 regulates the localization of the P3a-P17 heterodimer to plastids.</text>
</comment>
<comment type="similarity">
    <text evidence="4">Belongs to the polerovirus movement protein P3a family.</text>
</comment>
<comment type="caution">
    <text evidence="3">This sequence initiates at a non-canonical ACG threonine codon.</text>
</comment>
<organism>
    <name type="scientific">Turnip yellows virus (isolate FL-1)</name>
    <name type="common">TuYV</name>
    <name type="synonym">BWYV-FL1</name>
    <dbReference type="NCBI Taxonomy" id="12043"/>
    <lineage>
        <taxon>Viruses</taxon>
        <taxon>Riboviria</taxon>
        <taxon>Orthornavirae</taxon>
        <taxon>Pisuviricota</taxon>
        <taxon>Pisoniviricetes</taxon>
        <taxon>Sobelivirales</taxon>
        <taxon>Solemoviridae</taxon>
        <taxon>Polerovirus</taxon>
        <taxon>Beet western yellows virus</taxon>
    </lineage>
</organism>
<name>P3A_TYYVF</name>
<reference key="1">
    <citation type="journal article" date="1988" name="Nucleic Acids Res.">
        <title>Nucleotide sequence of beet western yellows virus RNA.</title>
        <authorList>
            <person name="Veidt I."/>
            <person name="Lot H."/>
            <person name="Leiser M."/>
            <person name="Scheidecker D."/>
            <person name="Guilley H."/>
            <person name="Richards K.E."/>
            <person name="Jonard G."/>
        </authorList>
    </citation>
    <scope>NUCLEOTIDE SEQUENCE [GENOMIC RNA]</scope>
</reference>
<reference key="2">
    <citation type="journal article" date="2015" name="PLoS Pathog.">
        <title>Discovery of a small non-AUG-initiated ORF in Poleroviruses and Luteoviruses that is required for long-distance movement.</title>
        <authorList>
            <person name="Smirnova E."/>
            <person name="Firth A.E."/>
            <person name="Miller W.A."/>
            <person name="Scheidecker D."/>
            <person name="Brault V."/>
            <person name="Reinbold C."/>
            <person name="Rakotondrafara A.M."/>
            <person name="Chung B.Y."/>
            <person name="Ziegler-Graff V."/>
        </authorList>
    </citation>
    <scope>FUNCTION</scope>
    <scope>SUBCELLULAR LOCATION</scope>
    <scope>IDENTIFICATION</scope>
</reference>
<proteinExistence type="inferred from homology"/>
<organismHost>
    <name type="scientific">Beta vulgaris</name>
    <name type="common">Sugar beet</name>
    <dbReference type="NCBI Taxonomy" id="161934"/>
</organismHost>
<organismHost>
    <name type="scientific">Brassica napus subsp. rapifera</name>
    <dbReference type="NCBI Taxonomy" id="3709"/>
</organismHost>
<organismHost>
    <name type="scientific">Brassica napus var. napus</name>
    <dbReference type="NCBI Taxonomy" id="138011"/>
</organismHost>
<organismHost>
    <name type="scientific">Brassica nigra</name>
    <name type="common">Black mustard</name>
    <name type="synonym">Sinapis nigra</name>
    <dbReference type="NCBI Taxonomy" id="3710"/>
</organismHost>
<organismHost>
    <name type="scientific">Brassica oleracea var. botrytis</name>
    <name type="common">Cauliflower</name>
    <dbReference type="NCBI Taxonomy" id="3715"/>
</organismHost>
<organismHost>
    <name type="scientific">Brassica oleracea var. capitata</name>
    <name type="common">Cabbage</name>
    <dbReference type="NCBI Taxonomy" id="3716"/>
</organismHost>
<organismHost>
    <name type="scientific">Brassica rapa subsp. rapa</name>
    <name type="common">Turnip</name>
    <dbReference type="NCBI Taxonomy" id="51350"/>
</organismHost>
<organismHost>
    <name type="scientific">Capsicum annuum</name>
    <name type="common">Capsicum pepper</name>
    <dbReference type="NCBI Taxonomy" id="4072"/>
</organismHost>
<organismHost>
    <name type="scientific">Cicer arietinum</name>
    <name type="common">Chickpea</name>
    <name type="synonym">Garbanzo</name>
    <dbReference type="NCBI Taxonomy" id="3827"/>
</organismHost>
<organismHost>
    <name type="scientific">Citrullus lanatus</name>
    <name type="common">Watermelon</name>
    <name type="synonym">Citrullus vulgaris</name>
    <dbReference type="NCBI Taxonomy" id="3654"/>
</organismHost>
<organismHost>
    <name type="scientific">Crambe hispanica subsp. abyssinica</name>
    <name type="common">Abyssinian kale</name>
    <name type="synonym">Crambe abyssinica</name>
    <dbReference type="NCBI Taxonomy" id="3721"/>
</organismHost>
<organismHost>
    <name type="scientific">Cucumis sativus</name>
    <name type="common">Cucumber</name>
    <dbReference type="NCBI Taxonomy" id="3659"/>
</organismHost>
<organismHost>
    <name type="scientific">Cucurbita pepo</name>
    <name type="common">Vegetable marrow</name>
    <name type="synonym">Summer squash</name>
    <dbReference type="NCBI Taxonomy" id="3663"/>
</organismHost>
<organismHost>
    <name type="scientific">Glycine max</name>
    <name type="common">Soybean</name>
    <name type="synonym">Glycine hispida</name>
    <dbReference type="NCBI Taxonomy" id="3847"/>
</organismHost>
<organismHost>
    <name type="scientific">Helianthus annuus</name>
    <name type="common">Common sunflower</name>
    <dbReference type="NCBI Taxonomy" id="4232"/>
</organismHost>
<organismHost>
    <name type="scientific">Lactuca sativa</name>
    <name type="common">Garden lettuce</name>
    <dbReference type="NCBI Taxonomy" id="4236"/>
</organismHost>
<organismHost>
    <name type="scientific">Phlox drummondii</name>
    <name type="common">Annual phlox</name>
    <dbReference type="NCBI Taxonomy" id="103529"/>
</organismHost>
<organismHost>
    <name type="scientific">Pisum sativum</name>
    <name type="common">Garden pea</name>
    <name type="synonym">Lathyrus oleraceus</name>
    <dbReference type="NCBI Taxonomy" id="3888"/>
</organismHost>
<organismHost>
    <name type="scientific">Raphanus sativus</name>
    <name type="common">Radish</name>
    <name type="synonym">Raphanus raphanistrum var. sativus</name>
    <dbReference type="NCBI Taxonomy" id="3726"/>
</organismHost>
<organismHost>
    <name type="scientific">Solanum lycopersicum</name>
    <name type="common">Tomato</name>
    <name type="synonym">Lycopersicon esculentum</name>
    <dbReference type="NCBI Taxonomy" id="4081"/>
</organismHost>
<organismHost>
    <name type="scientific">Spinacia oleracea</name>
    <name type="common">Spinach</name>
    <dbReference type="NCBI Taxonomy" id="3562"/>
</organismHost>
<organismHost>
    <name type="scientific">Trifolium subterraneum</name>
    <name type="common">Subterranean clover</name>
    <dbReference type="NCBI Taxonomy" id="3900"/>
</organismHost>
<organismHost>
    <name type="scientific">Vicia faba</name>
    <name type="common">Broad bean</name>
    <name type="synonym">Faba vulgaris</name>
    <dbReference type="NCBI Taxonomy" id="3906"/>
</organismHost>
<evidence type="ECO:0000250" key="1">
    <source>
        <dbReference type="UniProtKB" id="P0DTK2"/>
    </source>
</evidence>
<evidence type="ECO:0000255" key="2"/>
<evidence type="ECO:0000269" key="3">
    <source>
    </source>
</evidence>
<evidence type="ECO:0000305" key="4"/>
<sequence>MDYKFLAGFAAGFVSSIPISVISIYFIYLRISKHVREIVNEYGRG</sequence>
<accession>P0DJZ8</accession>
<protein>
    <recommendedName>
        <fullName>P3a</fullName>
    </recommendedName>
    <alternativeName>
        <fullName>Protein ORF3a</fullName>
    </alternativeName>
</protein>